<keyword id="KW-0007">Acetylation</keyword>
<keyword id="KW-0104">Cadmium</keyword>
<keyword id="KW-0186">Copper</keyword>
<keyword id="KW-0903">Direct protein sequencing</keyword>
<keyword id="KW-0479">Metal-binding</keyword>
<keyword id="KW-0480">Metal-thiolate cluster</keyword>
<keyword id="KW-0597">Phosphoprotein</keyword>
<keyword id="KW-1267">Proteomics identification</keyword>
<keyword id="KW-1185">Reference proteome</keyword>
<keyword id="KW-0862">Zinc</keyword>
<dbReference type="EMBL" id="X64834">
    <property type="protein sequence ID" value="CAA46046.1"/>
    <property type="molecule type" value="Genomic_DNA"/>
</dbReference>
<dbReference type="EMBL" id="X64177">
    <property type="protein sequence ID" value="CAA45516.1"/>
    <property type="molecule type" value="mRNA"/>
</dbReference>
<dbReference type="EMBL" id="BT007171">
    <property type="protein sequence ID" value="AAP35835.1"/>
    <property type="molecule type" value="mRNA"/>
</dbReference>
<dbReference type="EMBL" id="CH471092">
    <property type="protein sequence ID" value="EAW82884.1"/>
    <property type="molecule type" value="Genomic_DNA"/>
</dbReference>
<dbReference type="EMBL" id="BC008408">
    <property type="protein sequence ID" value="AAH08408.1"/>
    <property type="molecule type" value="mRNA"/>
</dbReference>
<dbReference type="EMBL" id="BC059780">
    <property type="protein sequence ID" value="AAH59780.1"/>
    <property type="molecule type" value="mRNA"/>
</dbReference>
<dbReference type="EMBL" id="BC146930">
    <property type="protein sequence ID" value="AAI46931.1"/>
    <property type="molecule type" value="mRNA"/>
</dbReference>
<dbReference type="EMBL" id="BC146934">
    <property type="protein sequence ID" value="AAI46935.1"/>
    <property type="molecule type" value="mRNA"/>
</dbReference>
<dbReference type="EMBL" id="S68948">
    <property type="protein sequence ID" value="AAB30081.1"/>
    <property type="molecule type" value="mRNA"/>
</dbReference>
<dbReference type="CCDS" id="CCDS10767.1"/>
<dbReference type="PIR" id="S47651">
    <property type="entry name" value="S47651"/>
</dbReference>
<dbReference type="RefSeq" id="NP_005942.1">
    <property type="nucleotide sequence ID" value="NM_005951.2"/>
</dbReference>
<dbReference type="SMR" id="P80294"/>
<dbReference type="BioGRID" id="110602">
    <property type="interactions" value="4"/>
</dbReference>
<dbReference type="FunCoup" id="P80294">
    <property type="interactions" value="19"/>
</dbReference>
<dbReference type="IntAct" id="P80294">
    <property type="interactions" value="2"/>
</dbReference>
<dbReference type="STRING" id="9606.ENSP00000330587"/>
<dbReference type="DrugBank" id="DB09130">
    <property type="generic name" value="Copper"/>
</dbReference>
<dbReference type="DrugBank" id="DB12965">
    <property type="generic name" value="Silver"/>
</dbReference>
<dbReference type="GlyGen" id="P80294">
    <property type="glycosylation" value="1 site, 2 N-linked glycans (1 site)"/>
</dbReference>
<dbReference type="iPTMnet" id="P80294"/>
<dbReference type="PhosphoSitePlus" id="P80294"/>
<dbReference type="BioMuta" id="MT1H"/>
<dbReference type="jPOST" id="P80294"/>
<dbReference type="MassIVE" id="P80294"/>
<dbReference type="PaxDb" id="9606-ENSP00000330587"/>
<dbReference type="PeptideAtlas" id="P80294"/>
<dbReference type="ProteomicsDB" id="57675"/>
<dbReference type="Pumba" id="P80294"/>
<dbReference type="Antibodypedia" id="76404">
    <property type="antibodies" value="26 antibodies from 6 providers"/>
</dbReference>
<dbReference type="DNASU" id="4496"/>
<dbReference type="Ensembl" id="ENST00000332374.5">
    <property type="protein sequence ID" value="ENSP00000330587.5"/>
    <property type="gene ID" value="ENSG00000205358.4"/>
</dbReference>
<dbReference type="GeneID" id="4496"/>
<dbReference type="KEGG" id="hsa:4496"/>
<dbReference type="MANE-Select" id="ENST00000332374.5">
    <property type="protein sequence ID" value="ENSP00000330587.5"/>
    <property type="RefSeq nucleotide sequence ID" value="NM_005951.2"/>
    <property type="RefSeq protein sequence ID" value="NP_005942.1"/>
</dbReference>
<dbReference type="UCSC" id="uc002ejw.3">
    <property type="organism name" value="human"/>
</dbReference>
<dbReference type="AGR" id="HGNC:7400"/>
<dbReference type="CTD" id="4496"/>
<dbReference type="DisGeNET" id="4496"/>
<dbReference type="GeneCards" id="MT1H"/>
<dbReference type="HGNC" id="HGNC:7400">
    <property type="gene designation" value="MT1H"/>
</dbReference>
<dbReference type="HPA" id="ENSG00000205358">
    <property type="expression patterns" value="Tissue enhanced (kidney, liver)"/>
</dbReference>
<dbReference type="MIM" id="156354">
    <property type="type" value="gene"/>
</dbReference>
<dbReference type="neXtProt" id="NX_P80294"/>
<dbReference type="OpenTargets" id="ENSG00000205358"/>
<dbReference type="PharmGKB" id="PA31205"/>
<dbReference type="VEuPathDB" id="HostDB:ENSG00000205358"/>
<dbReference type="eggNOG" id="KOG4738">
    <property type="taxonomic scope" value="Eukaryota"/>
</dbReference>
<dbReference type="GeneTree" id="ENSGT00950000182967"/>
<dbReference type="HOGENOM" id="CLU_171204_2_0_1"/>
<dbReference type="InParanoid" id="P80294"/>
<dbReference type="OMA" id="GCVCKES"/>
<dbReference type="OrthoDB" id="10542655at2759"/>
<dbReference type="PAN-GO" id="P80294">
    <property type="GO annotations" value="8 GO annotations based on evolutionary models"/>
</dbReference>
<dbReference type="TreeFam" id="TF336054"/>
<dbReference type="PathwayCommons" id="P80294"/>
<dbReference type="Reactome" id="R-HSA-5661231">
    <property type="pathway name" value="Metallothioneins bind metals"/>
</dbReference>
<dbReference type="SignaLink" id="P80294"/>
<dbReference type="BioGRID-ORCS" id="4496">
    <property type="hits" value="71 hits in 1052 CRISPR screens"/>
</dbReference>
<dbReference type="GeneWiki" id="MT1H"/>
<dbReference type="GenomeRNAi" id="4496"/>
<dbReference type="Pharos" id="P80294">
    <property type="development level" value="Tbio"/>
</dbReference>
<dbReference type="PRO" id="PR:P80294"/>
<dbReference type="Proteomes" id="UP000005640">
    <property type="component" value="Chromosome 16"/>
</dbReference>
<dbReference type="RNAct" id="P80294">
    <property type="molecule type" value="protein"/>
</dbReference>
<dbReference type="Bgee" id="ENSG00000205358">
    <property type="expression patterns" value="Expressed in ileal mucosa and 195 other cell types or tissues"/>
</dbReference>
<dbReference type="ExpressionAtlas" id="P80294">
    <property type="expression patterns" value="baseline and differential"/>
</dbReference>
<dbReference type="GO" id="GO:0005737">
    <property type="term" value="C:cytoplasm"/>
    <property type="evidence" value="ECO:0000250"/>
    <property type="project" value="UniProtKB"/>
</dbReference>
<dbReference type="GO" id="GO:0005634">
    <property type="term" value="C:nucleus"/>
    <property type="evidence" value="ECO:0000250"/>
    <property type="project" value="UniProtKB"/>
</dbReference>
<dbReference type="GO" id="GO:0046872">
    <property type="term" value="F:metal ion binding"/>
    <property type="evidence" value="ECO:0000318"/>
    <property type="project" value="GO_Central"/>
</dbReference>
<dbReference type="GO" id="GO:0008270">
    <property type="term" value="F:zinc ion binding"/>
    <property type="evidence" value="ECO:0000250"/>
    <property type="project" value="UniProtKB"/>
</dbReference>
<dbReference type="GO" id="GO:0071276">
    <property type="term" value="P:cellular response to cadmium ion"/>
    <property type="evidence" value="ECO:0000270"/>
    <property type="project" value="UniProtKB"/>
</dbReference>
<dbReference type="GO" id="GO:0071280">
    <property type="term" value="P:cellular response to copper ion"/>
    <property type="evidence" value="ECO:0000318"/>
    <property type="project" value="GO_Central"/>
</dbReference>
<dbReference type="GO" id="GO:0071294">
    <property type="term" value="P:cellular response to zinc ion"/>
    <property type="evidence" value="ECO:0000270"/>
    <property type="project" value="UniProtKB"/>
</dbReference>
<dbReference type="GO" id="GO:0010273">
    <property type="term" value="P:detoxification of copper ion"/>
    <property type="evidence" value="ECO:0000318"/>
    <property type="project" value="GO_Central"/>
</dbReference>
<dbReference type="GO" id="GO:0006882">
    <property type="term" value="P:intracellular zinc ion homeostasis"/>
    <property type="evidence" value="ECO:0000318"/>
    <property type="project" value="GO_Central"/>
</dbReference>
<dbReference type="GO" id="GO:0045926">
    <property type="term" value="P:negative regulation of growth"/>
    <property type="evidence" value="ECO:0000250"/>
    <property type="project" value="UniProtKB"/>
</dbReference>
<dbReference type="FunFam" id="4.10.10.10:FF:000001">
    <property type="entry name" value="Metallothionein"/>
    <property type="match status" value="1"/>
</dbReference>
<dbReference type="Gene3D" id="4.10.10.10">
    <property type="entry name" value="Metallothionein Isoform II"/>
    <property type="match status" value="1"/>
</dbReference>
<dbReference type="InterPro" id="IPR017854">
    <property type="entry name" value="Metalthion_dom_sf"/>
</dbReference>
<dbReference type="InterPro" id="IPR023587">
    <property type="entry name" value="Metalthion_dom_sf_vert"/>
</dbReference>
<dbReference type="InterPro" id="IPR000006">
    <property type="entry name" value="Metalthion_vert"/>
</dbReference>
<dbReference type="InterPro" id="IPR018064">
    <property type="entry name" value="Metalthion_vert_metal_BS"/>
</dbReference>
<dbReference type="PANTHER" id="PTHR23299">
    <property type="entry name" value="METALLOTHIONEIN"/>
    <property type="match status" value="1"/>
</dbReference>
<dbReference type="PANTHER" id="PTHR23299:SF4">
    <property type="entry name" value="METALLOTHIONEIN-1H"/>
    <property type="match status" value="1"/>
</dbReference>
<dbReference type="Pfam" id="PF00131">
    <property type="entry name" value="Metallothio"/>
    <property type="match status" value="1"/>
</dbReference>
<dbReference type="PRINTS" id="PR00860">
    <property type="entry name" value="MTVERTEBRATE"/>
</dbReference>
<dbReference type="SUPFAM" id="SSF57868">
    <property type="entry name" value="Metallothionein"/>
    <property type="match status" value="1"/>
</dbReference>
<dbReference type="PROSITE" id="PS00203">
    <property type="entry name" value="METALLOTHIONEIN_VRT"/>
    <property type="match status" value="1"/>
</dbReference>
<name>MT1H_HUMAN</name>
<reference key="1">
    <citation type="submission" date="1993-11" db="UniProtKB">
        <authorList>
            <person name="Hunziker P.E."/>
        </authorList>
    </citation>
    <scope>PROTEIN SEQUENCE</scope>
    <scope>ACETYLATION AT MET-1</scope>
    <source>
        <tissue>Liver</tissue>
    </source>
</reference>
<reference key="2">
    <citation type="journal article" date="1992" name="Eur. J. Biochem.">
        <title>Cloning and specific polymerised-chain-reaction amplification of a third charge-separable human metallothionein isoform.</title>
        <authorList>
            <person name="Soumillion A."/>
            <person name="van Damme J."/>
            <person name="de Ley M."/>
        </authorList>
    </citation>
    <scope>NUCLEOTIDE SEQUENCE [MRNA]</scope>
    <scope>PROTEIN SEQUENCE OF 3-22</scope>
    <source>
        <tissue>Embryonic liver</tissue>
    </source>
</reference>
<reference key="3">
    <citation type="journal article" date="1994" name="Biochim. Biophys. Acta">
        <title>Characterisation of six additional human metallothionein genes.</title>
        <authorList>
            <person name="Stennard F.A."/>
            <person name="Holloway A.F."/>
            <person name="Hamilton J."/>
            <person name="West A.K."/>
        </authorList>
    </citation>
    <scope>NUCLEOTIDE SEQUENCE [GENOMIC DNA]</scope>
</reference>
<reference key="4">
    <citation type="submission" date="2003-05" db="EMBL/GenBank/DDBJ databases">
        <title>Cloning of human full-length CDSs in BD Creator(TM) system donor vector.</title>
        <authorList>
            <person name="Kalnine N."/>
            <person name="Chen X."/>
            <person name="Rolfs A."/>
            <person name="Halleck A."/>
            <person name="Hines L."/>
            <person name="Eisenstein S."/>
            <person name="Koundinya M."/>
            <person name="Raphael J."/>
            <person name="Moreira D."/>
            <person name="Kelley T."/>
            <person name="LaBaer J."/>
            <person name="Lin Y."/>
            <person name="Phelan M."/>
            <person name="Farmer A."/>
        </authorList>
    </citation>
    <scope>NUCLEOTIDE SEQUENCE [LARGE SCALE MRNA]</scope>
</reference>
<reference key="5">
    <citation type="submission" date="2005-07" db="EMBL/GenBank/DDBJ databases">
        <authorList>
            <person name="Mural R.J."/>
            <person name="Istrail S."/>
            <person name="Sutton G.G."/>
            <person name="Florea L."/>
            <person name="Halpern A.L."/>
            <person name="Mobarry C.M."/>
            <person name="Lippert R."/>
            <person name="Walenz B."/>
            <person name="Shatkay H."/>
            <person name="Dew I."/>
            <person name="Miller J.R."/>
            <person name="Flanigan M.J."/>
            <person name="Edwards N.J."/>
            <person name="Bolanos R."/>
            <person name="Fasulo D."/>
            <person name="Halldorsson B.V."/>
            <person name="Hannenhalli S."/>
            <person name="Turner R."/>
            <person name="Yooseph S."/>
            <person name="Lu F."/>
            <person name="Nusskern D.R."/>
            <person name="Shue B.C."/>
            <person name="Zheng X.H."/>
            <person name="Zhong F."/>
            <person name="Delcher A.L."/>
            <person name="Huson D.H."/>
            <person name="Kravitz S.A."/>
            <person name="Mouchard L."/>
            <person name="Reinert K."/>
            <person name="Remington K.A."/>
            <person name="Clark A.G."/>
            <person name="Waterman M.S."/>
            <person name="Eichler E.E."/>
            <person name="Adams M.D."/>
            <person name="Hunkapiller M.W."/>
            <person name="Myers E.W."/>
            <person name="Venter J.C."/>
        </authorList>
    </citation>
    <scope>NUCLEOTIDE SEQUENCE [LARGE SCALE GENOMIC DNA]</scope>
</reference>
<reference key="6">
    <citation type="journal article" date="2004" name="Genome Res.">
        <title>The status, quality, and expansion of the NIH full-length cDNA project: the Mammalian Gene Collection (MGC).</title>
        <authorList>
            <consortium name="The MGC Project Team"/>
        </authorList>
    </citation>
    <scope>NUCLEOTIDE SEQUENCE [LARGE SCALE MRNA]</scope>
    <source>
        <tissue>Brain</tissue>
        <tissue>Pancreas</tissue>
        <tissue>Prostate</tissue>
    </source>
</reference>
<reference key="7">
    <citation type="journal article" date="1994" name="Eur. J. Biochem.">
        <title>Induction by zinc of specific metallothionein isoforms in human monocytes.</title>
        <authorList>
            <person name="Pauwels M."/>
            <person name="van Weyenbergh J."/>
            <person name="Soumillion A."/>
            <person name="Proost P."/>
            <person name="Ley M."/>
        </authorList>
    </citation>
    <scope>NUCLEOTIDE SEQUENCE [MRNA] OF 1-31</scope>
    <scope>PROTEIN SEQUENCE OF 1-30</scope>
    <source>
        <tissue>Monocyte</tissue>
    </source>
</reference>
<feature type="chain" id="PRO_0000197239" description="Metallothionein-1H">
    <location>
        <begin position="1"/>
        <end position="61"/>
    </location>
</feature>
<feature type="region of interest" description="Beta">
    <location>
        <begin position="1"/>
        <end position="29"/>
    </location>
</feature>
<feature type="region of interest" description="Alpha">
    <location>
        <begin position="30"/>
        <end position="61"/>
    </location>
</feature>
<feature type="binding site" evidence="1">
    <location>
        <position position="5"/>
    </location>
    <ligand>
        <name>a divalent metal cation</name>
        <dbReference type="ChEBI" id="CHEBI:60240"/>
        <label>1</label>
        <note>in cluster B</note>
    </ligand>
</feature>
<feature type="binding site" evidence="1">
    <location>
        <position position="7"/>
    </location>
    <ligand>
        <name>a divalent metal cation</name>
        <dbReference type="ChEBI" id="CHEBI:60240"/>
        <label>1</label>
        <note>in cluster B</note>
    </ligand>
</feature>
<feature type="binding site" evidence="1">
    <location>
        <position position="7"/>
    </location>
    <ligand>
        <name>a divalent metal cation</name>
        <dbReference type="ChEBI" id="CHEBI:60240"/>
        <label>2</label>
        <note>in cluster B</note>
    </ligand>
</feature>
<feature type="binding site" evidence="1">
    <location>
        <position position="13"/>
    </location>
    <ligand>
        <name>a divalent metal cation</name>
        <dbReference type="ChEBI" id="CHEBI:60240"/>
        <label>2</label>
        <note>in cluster B</note>
    </ligand>
</feature>
<feature type="binding site" evidence="1">
    <location>
        <position position="15"/>
    </location>
    <ligand>
        <name>a divalent metal cation</name>
        <dbReference type="ChEBI" id="CHEBI:60240"/>
        <label>2</label>
        <note>in cluster B</note>
    </ligand>
</feature>
<feature type="binding site" evidence="1">
    <location>
        <position position="15"/>
    </location>
    <ligand>
        <name>a divalent metal cation</name>
        <dbReference type="ChEBI" id="CHEBI:60240"/>
        <label>3</label>
        <note>in cluster B</note>
    </ligand>
</feature>
<feature type="binding site" evidence="1">
    <location>
        <position position="19"/>
    </location>
    <ligand>
        <name>a divalent metal cation</name>
        <dbReference type="ChEBI" id="CHEBI:60240"/>
        <label>3</label>
        <note>in cluster B</note>
    </ligand>
</feature>
<feature type="binding site" evidence="1">
    <location>
        <position position="21"/>
    </location>
    <ligand>
        <name>a divalent metal cation</name>
        <dbReference type="ChEBI" id="CHEBI:60240"/>
        <label>1</label>
        <note>in cluster B</note>
    </ligand>
</feature>
<feature type="binding site" evidence="1">
    <location>
        <position position="24"/>
    </location>
    <ligand>
        <name>a divalent metal cation</name>
        <dbReference type="ChEBI" id="CHEBI:60240"/>
        <label>1</label>
        <note>in cluster B</note>
    </ligand>
</feature>
<feature type="binding site" evidence="1">
    <location>
        <position position="24"/>
    </location>
    <ligand>
        <name>a divalent metal cation</name>
        <dbReference type="ChEBI" id="CHEBI:60240"/>
        <label>3</label>
        <note>in cluster B</note>
    </ligand>
</feature>
<feature type="binding site" evidence="1">
    <location>
        <position position="26"/>
    </location>
    <ligand>
        <name>a divalent metal cation</name>
        <dbReference type="ChEBI" id="CHEBI:60240"/>
        <label>2</label>
        <note>in cluster B</note>
    </ligand>
</feature>
<feature type="binding site" evidence="1">
    <location>
        <position position="29"/>
    </location>
    <ligand>
        <name>a divalent metal cation</name>
        <dbReference type="ChEBI" id="CHEBI:60240"/>
        <label>3</label>
        <note>in cluster B</note>
    </ligand>
</feature>
<feature type="binding site" evidence="1">
    <location>
        <position position="33"/>
    </location>
    <ligand>
        <name>a divalent metal cation</name>
        <dbReference type="ChEBI" id="CHEBI:60240"/>
        <label>4</label>
        <note>in cluster A</note>
    </ligand>
</feature>
<feature type="binding site" evidence="1">
    <location>
        <position position="34"/>
    </location>
    <ligand>
        <name>a divalent metal cation</name>
        <dbReference type="ChEBI" id="CHEBI:60240"/>
        <label>4</label>
        <note>in cluster A</note>
    </ligand>
</feature>
<feature type="binding site" evidence="1">
    <location>
        <position position="34"/>
    </location>
    <ligand>
        <name>a divalent metal cation</name>
        <dbReference type="ChEBI" id="CHEBI:60240"/>
        <label>5</label>
        <note>in cluster A</note>
    </ligand>
</feature>
<feature type="binding site" evidence="1">
    <location>
        <position position="36"/>
    </location>
    <ligand>
        <name>a divalent metal cation</name>
        <dbReference type="ChEBI" id="CHEBI:60240"/>
        <label>5</label>
        <note>in cluster A</note>
    </ligand>
</feature>
<feature type="binding site" evidence="1">
    <location>
        <position position="37"/>
    </location>
    <ligand>
        <name>a divalent metal cation</name>
        <dbReference type="ChEBI" id="CHEBI:60240"/>
        <label>5</label>
        <note>in cluster A</note>
    </ligand>
</feature>
<feature type="binding site" evidence="1">
    <location>
        <position position="37"/>
    </location>
    <ligand>
        <name>a divalent metal cation</name>
        <dbReference type="ChEBI" id="CHEBI:60240"/>
        <label>6</label>
        <note>in cluster A</note>
    </ligand>
</feature>
<feature type="binding site" evidence="1">
    <location>
        <position position="41"/>
    </location>
    <ligand>
        <name>a divalent metal cation</name>
        <dbReference type="ChEBI" id="CHEBI:60240"/>
        <label>6</label>
        <note>in cluster A</note>
    </ligand>
</feature>
<feature type="binding site" evidence="1">
    <location>
        <position position="44"/>
    </location>
    <ligand>
        <name>a divalent metal cation</name>
        <dbReference type="ChEBI" id="CHEBI:60240"/>
        <label>4</label>
        <note>in cluster A</note>
    </ligand>
</feature>
<feature type="binding site" evidence="1">
    <location>
        <position position="44"/>
    </location>
    <ligand>
        <name>a divalent metal cation</name>
        <dbReference type="ChEBI" id="CHEBI:60240"/>
        <label>6</label>
        <note>in cluster A</note>
    </ligand>
</feature>
<feature type="binding site" evidence="1">
    <location>
        <position position="48"/>
    </location>
    <ligand>
        <name>a divalent metal cation</name>
        <dbReference type="ChEBI" id="CHEBI:60240"/>
        <label>4</label>
        <note>in cluster A</note>
    </ligand>
</feature>
<feature type="binding site" evidence="1">
    <location>
        <position position="50"/>
    </location>
    <ligand>
        <name>a divalent metal cation</name>
        <dbReference type="ChEBI" id="CHEBI:60240"/>
        <label>5</label>
        <note>in cluster A</note>
    </ligand>
</feature>
<feature type="binding site" evidence="1">
    <location>
        <position position="50"/>
    </location>
    <ligand>
        <name>a divalent metal cation</name>
        <dbReference type="ChEBI" id="CHEBI:60240"/>
        <label>7</label>
        <note>in cluster A</note>
    </ligand>
</feature>
<feature type="binding site" evidence="1">
    <location>
        <position position="57"/>
    </location>
    <ligand>
        <name>a divalent metal cation</name>
        <dbReference type="ChEBI" id="CHEBI:60240"/>
        <label>7</label>
        <note>in cluster A</note>
    </ligand>
</feature>
<feature type="binding site" evidence="1">
    <location>
        <position position="59"/>
    </location>
    <ligand>
        <name>a divalent metal cation</name>
        <dbReference type="ChEBI" id="CHEBI:60240"/>
        <label>7</label>
        <note>in cluster A</note>
    </ligand>
</feature>
<feature type="binding site" evidence="1">
    <location>
        <position position="60"/>
    </location>
    <ligand>
        <name>a divalent metal cation</name>
        <dbReference type="ChEBI" id="CHEBI:60240"/>
        <label>6</label>
        <note>in cluster A</note>
    </ligand>
</feature>
<feature type="binding site" evidence="1">
    <location>
        <position position="60"/>
    </location>
    <ligand>
        <name>a divalent metal cation</name>
        <dbReference type="ChEBI" id="CHEBI:60240"/>
        <label>7</label>
        <note>in cluster A</note>
    </ligand>
</feature>
<feature type="modified residue" description="N-acetylmethionine" evidence="2 3">
    <location>
        <position position="1"/>
    </location>
</feature>
<feature type="modified residue" description="Phosphoserine" evidence="1">
    <location>
        <position position="58"/>
    </location>
</feature>
<organism>
    <name type="scientific">Homo sapiens</name>
    <name type="common">Human</name>
    <dbReference type="NCBI Taxonomy" id="9606"/>
    <lineage>
        <taxon>Eukaryota</taxon>
        <taxon>Metazoa</taxon>
        <taxon>Chordata</taxon>
        <taxon>Craniata</taxon>
        <taxon>Vertebrata</taxon>
        <taxon>Euteleostomi</taxon>
        <taxon>Mammalia</taxon>
        <taxon>Eutheria</taxon>
        <taxon>Euarchontoglires</taxon>
        <taxon>Primates</taxon>
        <taxon>Haplorrhini</taxon>
        <taxon>Catarrhini</taxon>
        <taxon>Hominidae</taxon>
        <taxon>Homo</taxon>
    </lineage>
</organism>
<proteinExistence type="evidence at protein level"/>
<gene>
    <name type="primary">MT1H</name>
</gene>
<comment type="function">
    <text>Metallothioneins have a high content of cysteine residues that bind various heavy metals; these proteins are transcriptionally regulated by both heavy metals and glucocorticoids.</text>
</comment>
<comment type="subunit">
    <text>Monomer.</text>
</comment>
<comment type="interaction">
    <interactant intactId="EBI-296567">
        <id>P80294</id>
    </interactant>
    <interactant intactId="EBI-1182445">
        <id>P58062</id>
        <label>SPINK7</label>
    </interactant>
    <organismsDiffer>false</organismsDiffer>
    <experiments>3</experiments>
</comment>
<comment type="domain">
    <text>Class I metallothioneins contain 2 metal-binding domains: four divalent ions are chelated within cluster A of the alpha domain and are coordinated via cysteinyl thiolate bridges to 11 cysteine ligands. Cluster B, the corresponding region within the beta domain, can ligate three divalent ions to 9 cysteines.</text>
</comment>
<comment type="similarity">
    <text evidence="4">Belongs to the metallothionein superfamily. Type 1 family.</text>
</comment>
<accession>P80294</accession>
<accession>B2RUY6</accession>
<evidence type="ECO:0000250" key="1">
    <source>
        <dbReference type="UniProtKB" id="P02795"/>
    </source>
</evidence>
<evidence type="ECO:0000269" key="2">
    <source>
    </source>
</evidence>
<evidence type="ECO:0000269" key="3">
    <source ref="1"/>
</evidence>
<evidence type="ECO:0000305" key="4"/>
<sequence>MDPNCSCEAGGSCACAGSCKCKKCKCTSCKKSCCSCCPLGCAKCAQGCICKGASEKCSCCA</sequence>
<protein>
    <recommendedName>
        <fullName>Metallothionein-1H</fullName>
        <shortName>MT-1H</shortName>
    </recommendedName>
    <alternativeName>
        <fullName>Metallothionein-0</fullName>
        <shortName>MT-0</shortName>
    </alternativeName>
    <alternativeName>
        <fullName>Metallothionein-IH</fullName>
        <shortName>MT-IH</shortName>
    </alternativeName>
</protein>